<gene>
    <name type="primary">DENND2C</name>
</gene>
<feature type="chain" id="PRO_0000242684" description="DENN domain-containing protein 2C">
    <location>
        <begin position="1"/>
        <end position="928"/>
    </location>
</feature>
<feature type="domain" description="uDENN" evidence="2">
    <location>
        <begin position="492"/>
        <end position="641"/>
    </location>
</feature>
<feature type="domain" description="cDENN" evidence="2">
    <location>
        <begin position="663"/>
        <end position="796"/>
    </location>
</feature>
<feature type="domain" description="dDENN" evidence="2">
    <location>
        <begin position="798"/>
        <end position="888"/>
    </location>
</feature>
<feature type="region of interest" description="Disordered" evidence="3">
    <location>
        <begin position="67"/>
        <end position="105"/>
    </location>
</feature>
<feature type="region of interest" description="Disordered" evidence="3">
    <location>
        <begin position="245"/>
        <end position="266"/>
    </location>
</feature>
<feature type="region of interest" description="Disordered" evidence="3">
    <location>
        <begin position="428"/>
        <end position="456"/>
    </location>
</feature>
<feature type="compositionally biased region" description="Basic and acidic residues" evidence="3">
    <location>
        <begin position="85"/>
        <end position="105"/>
    </location>
</feature>
<feature type="modified residue" description="Phosphoserine" evidence="1">
    <location>
        <position position="271"/>
    </location>
</feature>
<feature type="splice variant" id="VSP_036782" description="In isoform 3." evidence="8">
    <location>
        <begin position="354"/>
        <end position="410"/>
    </location>
</feature>
<feature type="splice variant" id="VSP_019468" description="In isoform 2." evidence="7">
    <location>
        <begin position="642"/>
        <end position="753"/>
    </location>
</feature>
<feature type="sequence variant" id="VAR_026859" description="In dbSNP:rs7541738." evidence="4 5">
    <original>D</original>
    <variation>E</variation>
    <location>
        <position position="2"/>
    </location>
</feature>
<feature type="sequence variant" id="VAR_026860" description="In dbSNP:rs12136548." evidence="5">
    <original>D</original>
    <variation>G</variation>
    <location>
        <position position="170"/>
    </location>
</feature>
<feature type="sequence conflict" description="In Ref. 1; CAH18369." evidence="9" ref="1">
    <original>K</original>
    <variation>Q</variation>
    <location>
        <position position="392"/>
    </location>
</feature>
<feature type="sequence conflict" description="In Ref. 1; BX647950." evidence="9" ref="1">
    <original>A</original>
    <variation>T</variation>
    <location>
        <position position="769"/>
    </location>
</feature>
<feature type="sequence conflict" description="In Ref. 1; CAH18369." evidence="9" ref="1">
    <original>Q</original>
    <variation>H</variation>
    <location>
        <position position="774"/>
    </location>
</feature>
<evidence type="ECO:0000250" key="1">
    <source>
        <dbReference type="UniProtKB" id="Q6P9P8"/>
    </source>
</evidence>
<evidence type="ECO:0000255" key="2">
    <source>
        <dbReference type="PROSITE-ProRule" id="PRU00304"/>
    </source>
</evidence>
<evidence type="ECO:0000256" key="3">
    <source>
        <dbReference type="SAM" id="MobiDB-lite"/>
    </source>
</evidence>
<evidence type="ECO:0000269" key="4">
    <source>
    </source>
</evidence>
<evidence type="ECO:0000269" key="5">
    <source>
    </source>
</evidence>
<evidence type="ECO:0000269" key="6">
    <source>
    </source>
</evidence>
<evidence type="ECO:0000303" key="7">
    <source>
    </source>
</evidence>
<evidence type="ECO:0000303" key="8">
    <source>
    </source>
</evidence>
<evidence type="ECO:0000305" key="9"/>
<dbReference type="EMBL" id="BX647950">
    <property type="status" value="NOT_ANNOTATED_CDS"/>
    <property type="molecule type" value="mRNA"/>
</dbReference>
<dbReference type="EMBL" id="CR749576">
    <property type="protein sequence ID" value="CAH18369.1"/>
    <property type="molecule type" value="mRNA"/>
</dbReference>
<dbReference type="EMBL" id="AL133382">
    <property type="status" value="NOT_ANNOTATED_CDS"/>
    <property type="molecule type" value="Genomic_DNA"/>
</dbReference>
<dbReference type="EMBL" id="BC063894">
    <property type="status" value="NOT_ANNOTATED_CDS"/>
    <property type="molecule type" value="mRNA"/>
</dbReference>
<dbReference type="CCDS" id="CCDS58018.1">
    <molecule id="Q68D51-1"/>
</dbReference>
<dbReference type="CCDS" id="CCDS875.1">
    <molecule id="Q68D51-3"/>
</dbReference>
<dbReference type="RefSeq" id="NP_001243333.1">
    <molecule id="Q68D51-1"/>
    <property type="nucleotide sequence ID" value="NM_001256404.2"/>
</dbReference>
<dbReference type="RefSeq" id="NP_940861.3">
    <molecule id="Q68D51-3"/>
    <property type="nucleotide sequence ID" value="NM_198459.3"/>
</dbReference>
<dbReference type="SMR" id="Q68D51"/>
<dbReference type="BioGRID" id="127862">
    <property type="interactions" value="14"/>
</dbReference>
<dbReference type="FunCoup" id="Q68D51">
    <property type="interactions" value="768"/>
</dbReference>
<dbReference type="IntAct" id="Q68D51">
    <property type="interactions" value="10"/>
</dbReference>
<dbReference type="STRING" id="9606.ENSP00000376955"/>
<dbReference type="GlyCosmos" id="Q68D51">
    <property type="glycosylation" value="1 site, 1 glycan"/>
</dbReference>
<dbReference type="GlyGen" id="Q68D51">
    <property type="glycosylation" value="2 sites, 1 O-linked glycan (2 sites)"/>
</dbReference>
<dbReference type="iPTMnet" id="Q68D51"/>
<dbReference type="PhosphoSitePlus" id="Q68D51"/>
<dbReference type="BioMuta" id="DENND2C"/>
<dbReference type="DMDM" id="109825713"/>
<dbReference type="jPOST" id="Q68D51"/>
<dbReference type="MassIVE" id="Q68D51"/>
<dbReference type="PaxDb" id="9606-ENSP00000376955"/>
<dbReference type="PeptideAtlas" id="Q68D51"/>
<dbReference type="ProteomicsDB" id="66050">
    <molecule id="Q68D51-1"/>
</dbReference>
<dbReference type="ProteomicsDB" id="66051">
    <molecule id="Q68D51-2"/>
</dbReference>
<dbReference type="ProteomicsDB" id="66052">
    <molecule id="Q68D51-3"/>
</dbReference>
<dbReference type="Antibodypedia" id="33861">
    <property type="antibodies" value="85 antibodies from 16 providers"/>
</dbReference>
<dbReference type="DNASU" id="163259"/>
<dbReference type="Ensembl" id="ENST00000393274.6">
    <molecule id="Q68D51-1"/>
    <property type="protein sequence ID" value="ENSP00000376955.1"/>
    <property type="gene ID" value="ENSG00000175984.16"/>
</dbReference>
<dbReference type="Ensembl" id="ENST00000393276.7">
    <molecule id="Q68D51-3"/>
    <property type="protein sequence ID" value="ENSP00000376957.3"/>
    <property type="gene ID" value="ENSG00000175984.16"/>
</dbReference>
<dbReference type="GeneID" id="163259"/>
<dbReference type="KEGG" id="hsa:163259"/>
<dbReference type="MANE-Select" id="ENST00000393274.6">
    <property type="protein sequence ID" value="ENSP00000376955.1"/>
    <property type="RefSeq nucleotide sequence ID" value="NM_001256404.2"/>
    <property type="RefSeq protein sequence ID" value="NP_001243333.1"/>
</dbReference>
<dbReference type="UCSC" id="uc001efc.2">
    <molecule id="Q68D51-1"/>
    <property type="organism name" value="human"/>
</dbReference>
<dbReference type="AGR" id="HGNC:24748"/>
<dbReference type="CTD" id="163259"/>
<dbReference type="DisGeNET" id="163259"/>
<dbReference type="GeneCards" id="DENND2C"/>
<dbReference type="HGNC" id="HGNC:24748">
    <property type="gene designation" value="DENND2C"/>
</dbReference>
<dbReference type="HPA" id="ENSG00000175984">
    <property type="expression patterns" value="Tissue enhanced (esophagus, skeletal muscle)"/>
</dbReference>
<dbReference type="neXtProt" id="NX_Q68D51"/>
<dbReference type="OpenTargets" id="ENSG00000175984"/>
<dbReference type="PharmGKB" id="PA142671985"/>
<dbReference type="VEuPathDB" id="HostDB:ENSG00000175984"/>
<dbReference type="eggNOG" id="KOG3569">
    <property type="taxonomic scope" value="Eukaryota"/>
</dbReference>
<dbReference type="GeneTree" id="ENSGT00950000182931"/>
<dbReference type="HOGENOM" id="CLU_008960_2_0_1"/>
<dbReference type="InParanoid" id="Q68D51"/>
<dbReference type="OMA" id="PDSKDWI"/>
<dbReference type="OrthoDB" id="10266080at2759"/>
<dbReference type="PAN-GO" id="Q68D51">
    <property type="GO annotations" value="0 GO annotations based on evolutionary models"/>
</dbReference>
<dbReference type="PhylomeDB" id="Q68D51"/>
<dbReference type="TreeFam" id="TF320336"/>
<dbReference type="PathwayCommons" id="Q68D51"/>
<dbReference type="Reactome" id="R-HSA-8876198">
    <property type="pathway name" value="RAB GEFs exchange GTP for GDP on RABs"/>
</dbReference>
<dbReference type="SignaLink" id="Q68D51"/>
<dbReference type="BioGRID-ORCS" id="163259">
    <property type="hits" value="20 hits in 1146 CRISPR screens"/>
</dbReference>
<dbReference type="ChiTaRS" id="DENND2C">
    <property type="organism name" value="human"/>
</dbReference>
<dbReference type="GenomeRNAi" id="163259"/>
<dbReference type="Pharos" id="Q68D51">
    <property type="development level" value="Tbio"/>
</dbReference>
<dbReference type="PRO" id="PR:Q68D51"/>
<dbReference type="Proteomes" id="UP000005640">
    <property type="component" value="Chromosome 1"/>
</dbReference>
<dbReference type="RNAct" id="Q68D51">
    <property type="molecule type" value="protein"/>
</dbReference>
<dbReference type="Bgee" id="ENSG00000175984">
    <property type="expression patterns" value="Expressed in esophagus squamous epithelium and 149 other cell types or tissues"/>
</dbReference>
<dbReference type="GO" id="GO:0005654">
    <property type="term" value="C:nucleoplasm"/>
    <property type="evidence" value="ECO:0000314"/>
    <property type="project" value="HPA"/>
</dbReference>
<dbReference type="GO" id="GO:0005085">
    <property type="term" value="F:guanyl-nucleotide exchange factor activity"/>
    <property type="evidence" value="ECO:0000314"/>
    <property type="project" value="UniProtKB"/>
</dbReference>
<dbReference type="FunFam" id="3.30.450.200:FF:000001">
    <property type="entry name" value="DENN domain-containing protein 2A isoform X1"/>
    <property type="match status" value="1"/>
</dbReference>
<dbReference type="FunFam" id="3.40.50.11500:FF:000004">
    <property type="entry name" value="DENN domain-containing protein 2C isoform X1"/>
    <property type="match status" value="1"/>
</dbReference>
<dbReference type="Gene3D" id="3.30.450.200">
    <property type="match status" value="1"/>
</dbReference>
<dbReference type="Gene3D" id="3.40.50.11500">
    <property type="match status" value="1"/>
</dbReference>
<dbReference type="InterPro" id="IPR001194">
    <property type="entry name" value="cDENN_dom"/>
</dbReference>
<dbReference type="InterPro" id="IPR005112">
    <property type="entry name" value="dDENN_dom"/>
</dbReference>
<dbReference type="InterPro" id="IPR043153">
    <property type="entry name" value="DENN_C"/>
</dbReference>
<dbReference type="InterPro" id="IPR051942">
    <property type="entry name" value="DENN_domain_containing_2"/>
</dbReference>
<dbReference type="InterPro" id="IPR037516">
    <property type="entry name" value="Tripartite_DENN"/>
</dbReference>
<dbReference type="InterPro" id="IPR005113">
    <property type="entry name" value="uDENN_dom"/>
</dbReference>
<dbReference type="PANTHER" id="PTHR15288">
    <property type="entry name" value="DENN DOMAIN-CONTAINING PROTEIN 2"/>
    <property type="match status" value="1"/>
</dbReference>
<dbReference type="PANTHER" id="PTHR15288:SF6">
    <property type="entry name" value="DENN DOMAIN-CONTAINING PROTEIN 2C"/>
    <property type="match status" value="1"/>
</dbReference>
<dbReference type="Pfam" id="PF03455">
    <property type="entry name" value="dDENN"/>
    <property type="match status" value="1"/>
</dbReference>
<dbReference type="Pfam" id="PF02141">
    <property type="entry name" value="DENN"/>
    <property type="match status" value="1"/>
</dbReference>
<dbReference type="Pfam" id="PF03456">
    <property type="entry name" value="uDENN"/>
    <property type="match status" value="1"/>
</dbReference>
<dbReference type="SMART" id="SM00801">
    <property type="entry name" value="dDENN"/>
    <property type="match status" value="1"/>
</dbReference>
<dbReference type="SMART" id="SM00799">
    <property type="entry name" value="DENN"/>
    <property type="match status" value="1"/>
</dbReference>
<dbReference type="SMART" id="SM00800">
    <property type="entry name" value="uDENN"/>
    <property type="match status" value="1"/>
</dbReference>
<dbReference type="PROSITE" id="PS50211">
    <property type="entry name" value="DENN"/>
    <property type="match status" value="1"/>
</dbReference>
<name>DEN2C_HUMAN</name>
<sequence length="928" mass="106865">MDVGFSRTTVQTLSRSHCKNIKQKISQWEGRANGISNPEKWCPKDFGVRYNCHQEIRLKKNPIAERKSKNLDVTSRENVGLDINENTKSHDQSENENKKHEYDDTHFFKNESESNWVCSRVKEIESCKEDVLDPETSLPPGNFYTSQILWKKIEALPPDKLLNLALEHCDSSEKELNFRVLDSSYGITKSLENIYSEPEGQECGPSINPLPKPRRTFRYLSESGVTPYKERNCDKKYCENNSCAQSSLASSQEPEPKKYGGKIRGRSKRKSFEFEDIQHFRNRNSQTIREELGRNSGSALYYTQSEDNIYEDIIYPTKENPYEDIPVQPLPMWRSPSAWKLPPAKSAFKAPKLPPKPQFLHRKTMEVKNSQAYLRSKLTKDTTLPVTLTEWKLFRAGEVANTKRKNLPRLVLKIDDIFESKRGKKKVKLHSYTGKELPPTKGETSGNESDAEYLPKNRHKRLAQLQPSSKRNPHYQTLERDLIELQEQQLFELFVVVSLQKKPSGISYIPQVIQQFPGKDDHGYKQSKDMEERLKVIPKFCFPDSKDWMPTSELKSETFSFVLTGEDGSRWFGYCKKLLPVGKGKRLPEVYCMVSRLGCFNLFSKILDEVEKRREMSPALVYPFMRSVMEAPFPAPGRTITVKSYLPGAGDESIELCRPLDSRLEHVDFKCLFKCLSVCHLIRVCASLLLERRVIFVANSLSTLSKCGHAVVATLYPFTWQHTYIPVLPASMIDIVCSPTPFLIGILSCSLPQLQDLPIEEVLIVDLCADKFLQEVSDEDEILPPKLQAALMQILEERNEILTQEQNFSQDVTLNSLVSEAFVRFFVELVGHYSLNMTVTERGERVFQREPFRKSHTSRSVRHFLDLFMETQMFAGFIQDRELRKSGVKGLFEIRAIQYLETIPESEPSGMNRILRSLGSKMKFLQKK</sequence>
<keyword id="KW-0025">Alternative splicing</keyword>
<keyword id="KW-0344">Guanine-nucleotide releasing factor</keyword>
<keyword id="KW-0597">Phosphoprotein</keyword>
<keyword id="KW-1267">Proteomics identification</keyword>
<keyword id="KW-1185">Reference proteome</keyword>
<reference key="1">
    <citation type="journal article" date="2007" name="BMC Genomics">
        <title>The full-ORF clone resource of the German cDNA consortium.</title>
        <authorList>
            <person name="Bechtel S."/>
            <person name="Rosenfelder H."/>
            <person name="Duda A."/>
            <person name="Schmidt C.P."/>
            <person name="Ernst U."/>
            <person name="Wellenreuther R."/>
            <person name="Mehrle A."/>
            <person name="Schuster C."/>
            <person name="Bahr A."/>
            <person name="Bloecker H."/>
            <person name="Heubner D."/>
            <person name="Hoerlein A."/>
            <person name="Michel G."/>
            <person name="Wedler H."/>
            <person name="Koehrer K."/>
            <person name="Ottenwaelder B."/>
            <person name="Poustka A."/>
            <person name="Wiemann S."/>
            <person name="Schupp I."/>
        </authorList>
    </citation>
    <scope>NUCLEOTIDE SEQUENCE [LARGE SCALE MRNA] (ISOFORMS 1 AND 3)</scope>
    <scope>VARIANTS GLU-2 AND GLY-170</scope>
    <source>
        <tissue>Testis</tissue>
    </source>
</reference>
<reference key="2">
    <citation type="journal article" date="2006" name="Nature">
        <title>The DNA sequence and biological annotation of human chromosome 1.</title>
        <authorList>
            <person name="Gregory S.G."/>
            <person name="Barlow K.F."/>
            <person name="McLay K.E."/>
            <person name="Kaul R."/>
            <person name="Swarbreck D."/>
            <person name="Dunham A."/>
            <person name="Scott C.E."/>
            <person name="Howe K.L."/>
            <person name="Woodfine K."/>
            <person name="Spencer C.C.A."/>
            <person name="Jones M.C."/>
            <person name="Gillson C."/>
            <person name="Searle S."/>
            <person name="Zhou Y."/>
            <person name="Kokocinski F."/>
            <person name="McDonald L."/>
            <person name="Evans R."/>
            <person name="Phillips K."/>
            <person name="Atkinson A."/>
            <person name="Cooper R."/>
            <person name="Jones C."/>
            <person name="Hall R.E."/>
            <person name="Andrews T.D."/>
            <person name="Lloyd C."/>
            <person name="Ainscough R."/>
            <person name="Almeida J.P."/>
            <person name="Ambrose K.D."/>
            <person name="Anderson F."/>
            <person name="Andrew R.W."/>
            <person name="Ashwell R.I.S."/>
            <person name="Aubin K."/>
            <person name="Babbage A.K."/>
            <person name="Bagguley C.L."/>
            <person name="Bailey J."/>
            <person name="Beasley H."/>
            <person name="Bethel G."/>
            <person name="Bird C.P."/>
            <person name="Bray-Allen S."/>
            <person name="Brown J.Y."/>
            <person name="Brown A.J."/>
            <person name="Buckley D."/>
            <person name="Burton J."/>
            <person name="Bye J."/>
            <person name="Carder C."/>
            <person name="Chapman J.C."/>
            <person name="Clark S.Y."/>
            <person name="Clarke G."/>
            <person name="Clee C."/>
            <person name="Cobley V."/>
            <person name="Collier R.E."/>
            <person name="Corby N."/>
            <person name="Coville G.J."/>
            <person name="Davies J."/>
            <person name="Deadman R."/>
            <person name="Dunn M."/>
            <person name="Earthrowl M."/>
            <person name="Ellington A.G."/>
            <person name="Errington H."/>
            <person name="Frankish A."/>
            <person name="Frankland J."/>
            <person name="French L."/>
            <person name="Garner P."/>
            <person name="Garnett J."/>
            <person name="Gay L."/>
            <person name="Ghori M.R.J."/>
            <person name="Gibson R."/>
            <person name="Gilby L.M."/>
            <person name="Gillett W."/>
            <person name="Glithero R.J."/>
            <person name="Grafham D.V."/>
            <person name="Griffiths C."/>
            <person name="Griffiths-Jones S."/>
            <person name="Grocock R."/>
            <person name="Hammond S."/>
            <person name="Harrison E.S.I."/>
            <person name="Hart E."/>
            <person name="Haugen E."/>
            <person name="Heath P.D."/>
            <person name="Holmes S."/>
            <person name="Holt K."/>
            <person name="Howden P.J."/>
            <person name="Hunt A.R."/>
            <person name="Hunt S.E."/>
            <person name="Hunter G."/>
            <person name="Isherwood J."/>
            <person name="James R."/>
            <person name="Johnson C."/>
            <person name="Johnson D."/>
            <person name="Joy A."/>
            <person name="Kay M."/>
            <person name="Kershaw J.K."/>
            <person name="Kibukawa M."/>
            <person name="Kimberley A.M."/>
            <person name="King A."/>
            <person name="Knights A.J."/>
            <person name="Lad H."/>
            <person name="Laird G."/>
            <person name="Lawlor S."/>
            <person name="Leongamornlert D.A."/>
            <person name="Lloyd D.M."/>
            <person name="Loveland J."/>
            <person name="Lovell J."/>
            <person name="Lush M.J."/>
            <person name="Lyne R."/>
            <person name="Martin S."/>
            <person name="Mashreghi-Mohammadi M."/>
            <person name="Matthews L."/>
            <person name="Matthews N.S.W."/>
            <person name="McLaren S."/>
            <person name="Milne S."/>
            <person name="Mistry S."/>
            <person name="Moore M.J.F."/>
            <person name="Nickerson T."/>
            <person name="O'Dell C.N."/>
            <person name="Oliver K."/>
            <person name="Palmeiri A."/>
            <person name="Palmer S.A."/>
            <person name="Parker A."/>
            <person name="Patel D."/>
            <person name="Pearce A.V."/>
            <person name="Peck A.I."/>
            <person name="Pelan S."/>
            <person name="Phelps K."/>
            <person name="Phillimore B.J."/>
            <person name="Plumb R."/>
            <person name="Rajan J."/>
            <person name="Raymond C."/>
            <person name="Rouse G."/>
            <person name="Saenphimmachak C."/>
            <person name="Sehra H.K."/>
            <person name="Sheridan E."/>
            <person name="Shownkeen R."/>
            <person name="Sims S."/>
            <person name="Skuce C.D."/>
            <person name="Smith M."/>
            <person name="Steward C."/>
            <person name="Subramanian S."/>
            <person name="Sycamore N."/>
            <person name="Tracey A."/>
            <person name="Tromans A."/>
            <person name="Van Helmond Z."/>
            <person name="Wall M."/>
            <person name="Wallis J.M."/>
            <person name="White S."/>
            <person name="Whitehead S.L."/>
            <person name="Wilkinson J.E."/>
            <person name="Willey D.L."/>
            <person name="Williams H."/>
            <person name="Wilming L."/>
            <person name="Wray P.W."/>
            <person name="Wu Z."/>
            <person name="Coulson A."/>
            <person name="Vaudin M."/>
            <person name="Sulston J.E."/>
            <person name="Durbin R.M."/>
            <person name="Hubbard T."/>
            <person name="Wooster R."/>
            <person name="Dunham I."/>
            <person name="Carter N.P."/>
            <person name="McVean G."/>
            <person name="Ross M.T."/>
            <person name="Harrow J."/>
            <person name="Olson M.V."/>
            <person name="Beck S."/>
            <person name="Rogers J."/>
            <person name="Bentley D.R."/>
        </authorList>
    </citation>
    <scope>NUCLEOTIDE SEQUENCE [LARGE SCALE GENOMIC DNA]</scope>
</reference>
<reference key="3">
    <citation type="journal article" date="2004" name="Genome Res.">
        <title>The status, quality, and expansion of the NIH full-length cDNA project: the Mammalian Gene Collection (MGC).</title>
        <authorList>
            <consortium name="The MGC Project Team"/>
        </authorList>
    </citation>
    <scope>NUCLEOTIDE SEQUENCE [LARGE SCALE MRNA] (ISOFORM 2)</scope>
    <scope>VARIANT GLU-2</scope>
    <source>
        <tissue>Testis</tissue>
    </source>
</reference>
<reference key="4">
    <citation type="journal article" date="2010" name="J. Cell Biol.">
        <title>Family-wide characterization of the DENN domain Rab GDP-GTP exchange factors.</title>
        <authorList>
            <person name="Yoshimura S."/>
            <person name="Gerondopoulos A."/>
            <person name="Linford A."/>
            <person name="Rigden D.J."/>
            <person name="Barr F.A."/>
        </authorList>
    </citation>
    <scope>FUNCTION AS GUANYL-NUCLEOTIDE EXCHANGE FACTOR</scope>
</reference>
<reference key="5">
    <citation type="journal article" date="2014" name="J. Proteomics">
        <title>An enzyme assisted RP-RPLC approach for in-depth analysis of human liver phosphoproteome.</title>
        <authorList>
            <person name="Bian Y."/>
            <person name="Song C."/>
            <person name="Cheng K."/>
            <person name="Dong M."/>
            <person name="Wang F."/>
            <person name="Huang J."/>
            <person name="Sun D."/>
            <person name="Wang L."/>
            <person name="Ye M."/>
            <person name="Zou H."/>
        </authorList>
    </citation>
    <scope>IDENTIFICATION BY MASS SPECTROMETRY [LARGE SCALE ANALYSIS]</scope>
    <source>
        <tissue>Liver</tissue>
    </source>
</reference>
<accession>Q68D51</accession>
<accession>B1AL26</accession>
<accession>Q5TCX6</accession>
<accession>Q6P3R3</accession>
<comment type="function">
    <text evidence="6">Guanine nucleotide exchange factor (GEF) which may activate RAB9A and RAB9B. Promotes the exchange of GDP to GTP, converting inactive GDP-bound Rab proteins into their active GTP-bound form.</text>
</comment>
<comment type="interaction">
    <interactant intactId="EBI-13075846">
        <id>Q68D51-2</id>
    </interactant>
    <interactant intactId="EBI-720609">
        <id>O76024</id>
        <label>WFS1</label>
    </interactant>
    <organismsDiffer>false</organismsDiffer>
    <experiments>3</experiments>
</comment>
<comment type="interaction">
    <interactant intactId="EBI-13075846">
        <id>Q68D51-2</id>
    </interactant>
    <interactant intactId="EBI-515331">
        <id>P07947</id>
        <label>YES1</label>
    </interactant>
    <organismsDiffer>false</organismsDiffer>
    <experiments>3</experiments>
</comment>
<comment type="alternative products">
    <event type="alternative splicing"/>
    <isoform>
        <id>Q68D51-1</id>
        <name>1</name>
        <sequence type="displayed"/>
    </isoform>
    <isoform>
        <id>Q68D51-2</id>
        <name>2</name>
        <sequence type="described" ref="VSP_019468"/>
    </isoform>
    <isoform>
        <id>Q68D51-3</id>
        <name>3</name>
        <sequence type="described" ref="VSP_036782"/>
    </isoform>
</comment>
<protein>
    <recommendedName>
        <fullName>DENN domain-containing protein 2C</fullName>
    </recommendedName>
</protein>
<proteinExistence type="evidence at protein level"/>
<organism>
    <name type="scientific">Homo sapiens</name>
    <name type="common">Human</name>
    <dbReference type="NCBI Taxonomy" id="9606"/>
    <lineage>
        <taxon>Eukaryota</taxon>
        <taxon>Metazoa</taxon>
        <taxon>Chordata</taxon>
        <taxon>Craniata</taxon>
        <taxon>Vertebrata</taxon>
        <taxon>Euteleostomi</taxon>
        <taxon>Mammalia</taxon>
        <taxon>Eutheria</taxon>
        <taxon>Euarchontoglires</taxon>
        <taxon>Primates</taxon>
        <taxon>Haplorrhini</taxon>
        <taxon>Catarrhini</taxon>
        <taxon>Hominidae</taxon>
        <taxon>Homo</taxon>
    </lineage>
</organism>